<reference key="1">
    <citation type="journal article" date="2008" name="Science">
        <title>The Physcomitrella genome reveals evolutionary insights into the conquest of land by plants.</title>
        <authorList>
            <person name="Rensing S.A."/>
            <person name="Lang D."/>
            <person name="Zimmer A.D."/>
            <person name="Terry A."/>
            <person name="Salamov A."/>
            <person name="Shapiro H."/>
            <person name="Nishiyama T."/>
            <person name="Perroud P.-F."/>
            <person name="Lindquist E.A."/>
            <person name="Kamisugi Y."/>
            <person name="Tanahashi T."/>
            <person name="Sakakibara K."/>
            <person name="Fujita T."/>
            <person name="Oishi K."/>
            <person name="Shin-I T."/>
            <person name="Kuroki Y."/>
            <person name="Toyoda A."/>
            <person name="Suzuki Y."/>
            <person name="Hashimoto S.-I."/>
            <person name="Yamaguchi K."/>
            <person name="Sugano S."/>
            <person name="Kohara Y."/>
            <person name="Fujiyama A."/>
            <person name="Anterola A."/>
            <person name="Aoki S."/>
            <person name="Ashton N."/>
            <person name="Barbazuk W.B."/>
            <person name="Barker E."/>
            <person name="Bennetzen J.L."/>
            <person name="Blankenship R."/>
            <person name="Cho S.H."/>
            <person name="Dutcher S.K."/>
            <person name="Estelle M."/>
            <person name="Fawcett J.A."/>
            <person name="Gundlach H."/>
            <person name="Hanada K."/>
            <person name="Heyl A."/>
            <person name="Hicks K.A."/>
            <person name="Hughes J."/>
            <person name="Lohr M."/>
            <person name="Mayer K."/>
            <person name="Melkozernov A."/>
            <person name="Murata T."/>
            <person name="Nelson D.R."/>
            <person name="Pils B."/>
            <person name="Prigge M."/>
            <person name="Reiss B."/>
            <person name="Renner T."/>
            <person name="Rombauts S."/>
            <person name="Rushton P.J."/>
            <person name="Sanderfoot A."/>
            <person name="Schween G."/>
            <person name="Shiu S.-H."/>
            <person name="Stueber K."/>
            <person name="Theodoulou F.L."/>
            <person name="Tu H."/>
            <person name="Van de Peer Y."/>
            <person name="Verrier P.J."/>
            <person name="Waters E."/>
            <person name="Wood A."/>
            <person name="Yang L."/>
            <person name="Cove D."/>
            <person name="Cuming A.C."/>
            <person name="Hasebe M."/>
            <person name="Lucas S."/>
            <person name="Mishler B.D."/>
            <person name="Reski R."/>
            <person name="Grigoriev I.V."/>
            <person name="Quatrano R.S."/>
            <person name="Boore J.L."/>
        </authorList>
    </citation>
    <scope>NUCLEOTIDE SEQUENCE [LARGE SCALE GENOMIC DNA]</scope>
    <source>
        <strain>cv. Gransden 2004</strain>
    </source>
</reference>
<proteinExistence type="inferred from homology"/>
<feature type="chain" id="PRO_0000402848" description="Translation factor GUF1 homolog, mitochondrial">
    <location>
        <begin position="1"/>
        <end position="684"/>
    </location>
</feature>
<feature type="domain" description="tr-type G">
    <location>
        <begin position="82"/>
        <end position="270"/>
    </location>
</feature>
<feature type="binding site" evidence="1">
    <location>
        <begin position="91"/>
        <end position="98"/>
    </location>
    <ligand>
        <name>GTP</name>
        <dbReference type="ChEBI" id="CHEBI:37565"/>
    </ligand>
</feature>
<feature type="binding site" evidence="1">
    <location>
        <begin position="163"/>
        <end position="167"/>
    </location>
    <ligand>
        <name>GTP</name>
        <dbReference type="ChEBI" id="CHEBI:37565"/>
    </ligand>
</feature>
<feature type="binding site" evidence="1">
    <location>
        <begin position="217"/>
        <end position="220"/>
    </location>
    <ligand>
        <name>GTP</name>
        <dbReference type="ChEBI" id="CHEBI:37565"/>
    </ligand>
</feature>
<name>GUF1_PHYPA</name>
<gene>
    <name type="ORF">PHYPADRAFT_180825</name>
</gene>
<comment type="function">
    <text evidence="1">Promotes mitochondrial protein synthesis. May act as a fidelity factor of the translation reaction, by catalyzing a one-codon backward translocation of tRNAs on improperly translocated ribosomes. Binds to mitochondrial ribosomes in a GTP-dependent manner.</text>
</comment>
<comment type="catalytic activity">
    <reaction evidence="1">
        <text>GTP + H2O = GDP + phosphate + H(+)</text>
        <dbReference type="Rhea" id="RHEA:19669"/>
        <dbReference type="ChEBI" id="CHEBI:15377"/>
        <dbReference type="ChEBI" id="CHEBI:15378"/>
        <dbReference type="ChEBI" id="CHEBI:37565"/>
        <dbReference type="ChEBI" id="CHEBI:43474"/>
        <dbReference type="ChEBI" id="CHEBI:58189"/>
    </reaction>
</comment>
<comment type="subcellular location">
    <subcellularLocation>
        <location evidence="1">Mitochondrion inner membrane</location>
        <topology evidence="1">Peripheral membrane protein</topology>
        <orientation evidence="1">Matrix side</orientation>
    </subcellularLocation>
</comment>
<comment type="miscellaneous">
    <text evidence="1">This protein may be expected to contain an N-terminal transit peptide but none has been predicted.</text>
</comment>
<comment type="similarity">
    <text evidence="2">Belongs to the TRAFAC class translation factor GTPase superfamily. Classic translation factor GTPase family. LepA subfamily.</text>
</comment>
<evidence type="ECO:0000255" key="1">
    <source>
        <dbReference type="HAMAP-Rule" id="MF_03137"/>
    </source>
</evidence>
<evidence type="ECO:0000305" key="2"/>
<accession>A9S3D3</accession>
<keyword id="KW-0342">GTP-binding</keyword>
<keyword id="KW-0378">Hydrolase</keyword>
<keyword id="KW-0472">Membrane</keyword>
<keyword id="KW-0496">Mitochondrion</keyword>
<keyword id="KW-0999">Mitochondrion inner membrane</keyword>
<keyword id="KW-0547">Nucleotide-binding</keyword>
<keyword id="KW-0648">Protein biosynthesis</keyword>
<keyword id="KW-1185">Reference proteome</keyword>
<dbReference type="EC" id="3.6.5.-"/>
<dbReference type="EMBL" id="DS544934">
    <property type="protein sequence ID" value="EDQ74230.1"/>
    <property type="molecule type" value="Genomic_DNA"/>
</dbReference>
<dbReference type="RefSeq" id="XP_001760841.1">
    <property type="nucleotide sequence ID" value="XM_001760789.1"/>
</dbReference>
<dbReference type="SMR" id="A9S3D3"/>
<dbReference type="FunCoup" id="A9S3D3">
    <property type="interactions" value="3670"/>
</dbReference>
<dbReference type="PaxDb" id="3218-PP1S45_94V6.1"/>
<dbReference type="eggNOG" id="KOG0462">
    <property type="taxonomic scope" value="Eukaryota"/>
</dbReference>
<dbReference type="HOGENOM" id="CLU_009995_3_3_1"/>
<dbReference type="InParanoid" id="A9S3D3"/>
<dbReference type="OMA" id="HADVFHQ"/>
<dbReference type="Proteomes" id="UP000006727">
    <property type="component" value="Chromosome 1"/>
</dbReference>
<dbReference type="GO" id="GO:0005743">
    <property type="term" value="C:mitochondrial inner membrane"/>
    <property type="evidence" value="ECO:0007669"/>
    <property type="project" value="UniProtKB-SubCell"/>
</dbReference>
<dbReference type="GO" id="GO:0005759">
    <property type="term" value="C:mitochondrial matrix"/>
    <property type="evidence" value="ECO:0007669"/>
    <property type="project" value="UniProtKB-UniRule"/>
</dbReference>
<dbReference type="GO" id="GO:0005525">
    <property type="term" value="F:GTP binding"/>
    <property type="evidence" value="ECO:0007669"/>
    <property type="project" value="UniProtKB-UniRule"/>
</dbReference>
<dbReference type="GO" id="GO:0003924">
    <property type="term" value="F:GTPase activity"/>
    <property type="evidence" value="ECO:0007669"/>
    <property type="project" value="UniProtKB-UniRule"/>
</dbReference>
<dbReference type="GO" id="GO:0043022">
    <property type="term" value="F:ribosome binding"/>
    <property type="evidence" value="ECO:0007669"/>
    <property type="project" value="UniProtKB-UniRule"/>
</dbReference>
<dbReference type="GO" id="GO:0045727">
    <property type="term" value="P:positive regulation of translation"/>
    <property type="evidence" value="ECO:0007669"/>
    <property type="project" value="UniProtKB-UniRule"/>
</dbReference>
<dbReference type="GO" id="GO:0006412">
    <property type="term" value="P:translation"/>
    <property type="evidence" value="ECO:0007669"/>
    <property type="project" value="UniProtKB-KW"/>
</dbReference>
<dbReference type="CDD" id="cd03699">
    <property type="entry name" value="EF4_II"/>
    <property type="match status" value="1"/>
</dbReference>
<dbReference type="CDD" id="cd16260">
    <property type="entry name" value="EF4_III"/>
    <property type="match status" value="1"/>
</dbReference>
<dbReference type="CDD" id="cd01890">
    <property type="entry name" value="LepA"/>
    <property type="match status" value="1"/>
</dbReference>
<dbReference type="CDD" id="cd03709">
    <property type="entry name" value="lepA_C"/>
    <property type="match status" value="1"/>
</dbReference>
<dbReference type="FunFam" id="3.40.50.300:FF:000078">
    <property type="entry name" value="Elongation factor 4"/>
    <property type="match status" value="1"/>
</dbReference>
<dbReference type="FunFam" id="2.40.30.10:FF:000015">
    <property type="entry name" value="Translation factor GUF1, mitochondrial"/>
    <property type="match status" value="1"/>
</dbReference>
<dbReference type="FunFam" id="3.30.70.240:FF:000007">
    <property type="entry name" value="Translation factor GUF1, mitochondrial"/>
    <property type="match status" value="1"/>
</dbReference>
<dbReference type="FunFam" id="3.30.70.2570:FF:000001">
    <property type="entry name" value="Translation factor GUF1, mitochondrial"/>
    <property type="match status" value="1"/>
</dbReference>
<dbReference type="FunFam" id="3.30.70.870:FF:000004">
    <property type="entry name" value="Translation factor GUF1, mitochondrial"/>
    <property type="match status" value="1"/>
</dbReference>
<dbReference type="Gene3D" id="3.30.70.240">
    <property type="match status" value="1"/>
</dbReference>
<dbReference type="Gene3D" id="3.30.70.2570">
    <property type="entry name" value="Elongation factor 4, C-terminal domain"/>
    <property type="match status" value="1"/>
</dbReference>
<dbReference type="Gene3D" id="3.30.70.870">
    <property type="entry name" value="Elongation Factor G (Translational Gtpase), domain 3"/>
    <property type="match status" value="1"/>
</dbReference>
<dbReference type="Gene3D" id="3.40.50.300">
    <property type="entry name" value="P-loop containing nucleotide triphosphate hydrolases"/>
    <property type="match status" value="1"/>
</dbReference>
<dbReference type="Gene3D" id="2.40.30.10">
    <property type="entry name" value="Translation factors"/>
    <property type="match status" value="1"/>
</dbReference>
<dbReference type="HAMAP" id="MF_00071">
    <property type="entry name" value="LepA"/>
    <property type="match status" value="1"/>
</dbReference>
<dbReference type="InterPro" id="IPR006297">
    <property type="entry name" value="EF-4"/>
</dbReference>
<dbReference type="InterPro" id="IPR035647">
    <property type="entry name" value="EFG_III/V"/>
</dbReference>
<dbReference type="InterPro" id="IPR000640">
    <property type="entry name" value="EFG_V-like"/>
</dbReference>
<dbReference type="InterPro" id="IPR004161">
    <property type="entry name" value="EFTu-like_2"/>
</dbReference>
<dbReference type="InterPro" id="IPR031157">
    <property type="entry name" value="G_TR_CS"/>
</dbReference>
<dbReference type="InterPro" id="IPR038363">
    <property type="entry name" value="LepA_C_sf"/>
</dbReference>
<dbReference type="InterPro" id="IPR013842">
    <property type="entry name" value="LepA_CTD"/>
</dbReference>
<dbReference type="InterPro" id="IPR035654">
    <property type="entry name" value="LepA_IV"/>
</dbReference>
<dbReference type="InterPro" id="IPR027417">
    <property type="entry name" value="P-loop_NTPase"/>
</dbReference>
<dbReference type="InterPro" id="IPR005225">
    <property type="entry name" value="Small_GTP-bd"/>
</dbReference>
<dbReference type="InterPro" id="IPR000795">
    <property type="entry name" value="T_Tr_GTP-bd_dom"/>
</dbReference>
<dbReference type="NCBIfam" id="TIGR01393">
    <property type="entry name" value="lepA"/>
    <property type="match status" value="1"/>
</dbReference>
<dbReference type="NCBIfam" id="TIGR00231">
    <property type="entry name" value="small_GTP"/>
    <property type="match status" value="1"/>
</dbReference>
<dbReference type="PANTHER" id="PTHR43512:SF7">
    <property type="entry name" value="TRANSLATION FACTOR GUF1, MITOCHONDRIAL"/>
    <property type="match status" value="1"/>
</dbReference>
<dbReference type="PANTHER" id="PTHR43512">
    <property type="entry name" value="TRANSLATION FACTOR GUF1-RELATED"/>
    <property type="match status" value="1"/>
</dbReference>
<dbReference type="Pfam" id="PF00679">
    <property type="entry name" value="EFG_C"/>
    <property type="match status" value="1"/>
</dbReference>
<dbReference type="Pfam" id="PF00009">
    <property type="entry name" value="GTP_EFTU"/>
    <property type="match status" value="1"/>
</dbReference>
<dbReference type="Pfam" id="PF03144">
    <property type="entry name" value="GTP_EFTU_D2"/>
    <property type="match status" value="1"/>
</dbReference>
<dbReference type="Pfam" id="PF06421">
    <property type="entry name" value="LepA_C"/>
    <property type="match status" value="1"/>
</dbReference>
<dbReference type="PRINTS" id="PR00315">
    <property type="entry name" value="ELONGATNFCT"/>
</dbReference>
<dbReference type="SUPFAM" id="SSF54980">
    <property type="entry name" value="EF-G C-terminal domain-like"/>
    <property type="match status" value="2"/>
</dbReference>
<dbReference type="SUPFAM" id="SSF52540">
    <property type="entry name" value="P-loop containing nucleoside triphosphate hydrolases"/>
    <property type="match status" value="1"/>
</dbReference>
<dbReference type="PROSITE" id="PS00301">
    <property type="entry name" value="G_TR_1"/>
    <property type="match status" value="1"/>
</dbReference>
<dbReference type="PROSITE" id="PS51722">
    <property type="entry name" value="G_TR_2"/>
    <property type="match status" value="1"/>
</dbReference>
<protein>
    <recommendedName>
        <fullName evidence="1">Translation factor GUF1 homolog, mitochondrial</fullName>
        <ecNumber>3.6.5.-</ecNumber>
    </recommendedName>
    <alternativeName>
        <fullName evidence="1">Elongation factor 4 homolog</fullName>
        <shortName evidence="1">EF-4</shortName>
    </alternativeName>
    <alternativeName>
        <fullName evidence="1">GTPase GUF1 homolog</fullName>
    </alternativeName>
    <alternativeName>
        <fullName evidence="1">Ribosomal back-translocase</fullName>
    </alternativeName>
</protein>
<sequence length="684" mass="75291">MPSIRAPLALTSFLLSLSGKPSTCVRSGLAANSRPWFGSIAGRNRVLANAPWWGGKAELSTDNSVVSGGKEENVDLKQYPPHLIRNFSIIAHVDHGKSTLADRLLELTGTIRKGHGQPQFLDKLQVERERGITVKAQTATMFYNYRSKKTGGANERFLLNLIDTPGHVDFSYEVSRSLAACQGVLLLVDAAQGVQAQTVANFYLAFESDLAIIPVINKIDQINADPEGVKSQLKQIFDIDPESVLLTSAKTGLGLENILPAVIERIPQPKGLVDASLRMLLLDSYYDEYRGVICHVAVVDGVLKRGDKIESAATRQSYEIMEVGILYPELTNTGILLTGQVGYVVTGMRSTKEARIGDTLFHTRSVVEPLPGFKPARHMVFAGVYPADGSDYEALSSAVERLTCNDASVSIAKETSGALGIGFRCGFLGLLHMDVFHQRLEQEHGAQVITTTPTVPYIFEYSDGSKLTIQNPAALPSNPKSRLVACYEPTVMATIITPSEYVGSLMTLCSERRGQQTEYSFIDGQRAMLKYRMPLREVVIDFYNELKSITSGYASFDYEEAPYQESDLVKLDILLNGQPVDALASICHRSKAHYVGRELCEKLKKVLDRQMFEVAIQAAIGAKVVARETLPALRKNVLAKCYGGDVSRKRKLLEKQKEGKKRMKRVGNVDIPQEAFHSLLKTGN</sequence>
<organism>
    <name type="scientific">Physcomitrium patens</name>
    <name type="common">Spreading-leaved earth moss</name>
    <name type="synonym">Physcomitrella patens</name>
    <dbReference type="NCBI Taxonomy" id="3218"/>
    <lineage>
        <taxon>Eukaryota</taxon>
        <taxon>Viridiplantae</taxon>
        <taxon>Streptophyta</taxon>
        <taxon>Embryophyta</taxon>
        <taxon>Bryophyta</taxon>
        <taxon>Bryophytina</taxon>
        <taxon>Bryopsida</taxon>
        <taxon>Funariidae</taxon>
        <taxon>Funariales</taxon>
        <taxon>Funariaceae</taxon>
        <taxon>Physcomitrium</taxon>
    </lineage>
</organism>